<dbReference type="EMBL" id="AL009126">
    <property type="protein sequence ID" value="CAB11962.1"/>
    <property type="molecule type" value="Genomic_DNA"/>
</dbReference>
<dbReference type="EMBL" id="AB006424">
    <property type="protein sequence ID" value="BAA33079.1"/>
    <property type="molecule type" value="Genomic_DNA"/>
</dbReference>
<dbReference type="PIR" id="F69745">
    <property type="entry name" value="F69745"/>
</dbReference>
<dbReference type="RefSeq" id="NP_388067.1">
    <property type="nucleotide sequence ID" value="NC_000964.3"/>
</dbReference>
<dbReference type="RefSeq" id="WP_003246329.1">
    <property type="nucleotide sequence ID" value="NZ_OZ025638.1"/>
</dbReference>
<dbReference type="SMR" id="O34823"/>
<dbReference type="FunCoup" id="O34823">
    <property type="interactions" value="124"/>
</dbReference>
<dbReference type="STRING" id="224308.BSU01860"/>
<dbReference type="PaxDb" id="224308-BSU01860"/>
<dbReference type="EnsemblBacteria" id="CAB11962">
    <property type="protein sequence ID" value="CAB11962"/>
    <property type="gene ID" value="BSU_01860"/>
</dbReference>
<dbReference type="GeneID" id="938524"/>
<dbReference type="KEGG" id="bsu:BSU01860"/>
<dbReference type="PATRIC" id="fig|224308.179.peg.191"/>
<dbReference type="eggNOG" id="COG0288">
    <property type="taxonomic scope" value="Bacteria"/>
</dbReference>
<dbReference type="InParanoid" id="O34823"/>
<dbReference type="OrthoDB" id="9792260at2"/>
<dbReference type="PhylomeDB" id="O34823"/>
<dbReference type="BioCyc" id="BSUB:BSU01860-MONOMER"/>
<dbReference type="Proteomes" id="UP000001570">
    <property type="component" value="Chromosome"/>
</dbReference>
<dbReference type="GO" id="GO:0004089">
    <property type="term" value="F:carbonate dehydratase activity"/>
    <property type="evidence" value="ECO:0007669"/>
    <property type="project" value="InterPro"/>
</dbReference>
<dbReference type="GO" id="GO:0008270">
    <property type="term" value="F:zinc ion binding"/>
    <property type="evidence" value="ECO:0007669"/>
    <property type="project" value="InterPro"/>
</dbReference>
<dbReference type="Gene3D" id="3.40.1050.10">
    <property type="entry name" value="Carbonic anhydrase"/>
    <property type="match status" value="1"/>
</dbReference>
<dbReference type="InterPro" id="IPR001765">
    <property type="entry name" value="Carbonic_anhydrase"/>
</dbReference>
<dbReference type="InterPro" id="IPR036874">
    <property type="entry name" value="Carbonic_anhydrase_sf"/>
</dbReference>
<dbReference type="PANTHER" id="PTHR43175">
    <property type="entry name" value="CARBONIC ANHYDRASE"/>
    <property type="match status" value="1"/>
</dbReference>
<dbReference type="PANTHER" id="PTHR43175:SF1">
    <property type="entry name" value="CARBONIC ANHYDRASE-LIKE PROTEIN YBCF-RELATED"/>
    <property type="match status" value="1"/>
</dbReference>
<dbReference type="SUPFAM" id="SSF53056">
    <property type="entry name" value="beta-carbonic anhydrase, cab"/>
    <property type="match status" value="1"/>
</dbReference>
<keyword id="KW-1185">Reference proteome</keyword>
<comment type="similarity">
    <text evidence="1">Belongs to the beta-class carbonic anhydrase family.</text>
</comment>
<comment type="caution">
    <text evidence="1">This protein does not seem to be able to bind zinc, which all carbonic anhydrases are thought to require.</text>
</comment>
<sequence>MNVNQNKKVLFLTDIENGLEPILQEATNTSAENMLTIQSYGASISHPYGEIMRSVIFAIYQEDVEEIFVVGTKDKKTSAGNGLTQLETMKDKIQTLDYLFQNCKPEFLGGTVDEWLNENSSDTIEKSVDMIRHHPLVPSYVKVRGLFVNHKGGKPSIAEVPDVKTGQAMPDHCLS</sequence>
<feature type="chain" id="PRO_0000388359" description="Putative carbonic anhydrase-like protein YbcF">
    <location>
        <begin position="1"/>
        <end position="175"/>
    </location>
</feature>
<feature type="sequence conflict" description="In Ref. 2; BAA33079." evidence="1" ref="2">
    <original>N</original>
    <variation>I</variation>
    <location>
        <position position="6"/>
    </location>
</feature>
<feature type="sequence conflict" description="In Ref. 2; BAA33079." evidence="1" ref="2">
    <original>Q</original>
    <variation>P</variation>
    <location>
        <position position="38"/>
    </location>
</feature>
<proteinExistence type="inferred from homology"/>
<evidence type="ECO:0000305" key="1"/>
<accession>O34823</accession>
<accession>O87093</accession>
<gene>
    <name type="primary">ybcF</name>
    <name type="ordered locus">BSU01860</name>
</gene>
<protein>
    <recommendedName>
        <fullName>Putative carbonic anhydrase-like protein YbcF</fullName>
    </recommendedName>
</protein>
<reference key="1">
    <citation type="journal article" date="1997" name="Nature">
        <title>The complete genome sequence of the Gram-positive bacterium Bacillus subtilis.</title>
        <authorList>
            <person name="Kunst F."/>
            <person name="Ogasawara N."/>
            <person name="Moszer I."/>
            <person name="Albertini A.M."/>
            <person name="Alloni G."/>
            <person name="Azevedo V."/>
            <person name="Bertero M.G."/>
            <person name="Bessieres P."/>
            <person name="Bolotin A."/>
            <person name="Borchert S."/>
            <person name="Borriss R."/>
            <person name="Boursier L."/>
            <person name="Brans A."/>
            <person name="Braun M."/>
            <person name="Brignell S.C."/>
            <person name="Bron S."/>
            <person name="Brouillet S."/>
            <person name="Bruschi C.V."/>
            <person name="Caldwell B."/>
            <person name="Capuano V."/>
            <person name="Carter N.M."/>
            <person name="Choi S.-K."/>
            <person name="Codani J.-J."/>
            <person name="Connerton I.F."/>
            <person name="Cummings N.J."/>
            <person name="Daniel R.A."/>
            <person name="Denizot F."/>
            <person name="Devine K.M."/>
            <person name="Duesterhoeft A."/>
            <person name="Ehrlich S.D."/>
            <person name="Emmerson P.T."/>
            <person name="Entian K.-D."/>
            <person name="Errington J."/>
            <person name="Fabret C."/>
            <person name="Ferrari E."/>
            <person name="Foulger D."/>
            <person name="Fritz C."/>
            <person name="Fujita M."/>
            <person name="Fujita Y."/>
            <person name="Fuma S."/>
            <person name="Galizzi A."/>
            <person name="Galleron N."/>
            <person name="Ghim S.-Y."/>
            <person name="Glaser P."/>
            <person name="Goffeau A."/>
            <person name="Golightly E.J."/>
            <person name="Grandi G."/>
            <person name="Guiseppi G."/>
            <person name="Guy B.J."/>
            <person name="Haga K."/>
            <person name="Haiech J."/>
            <person name="Harwood C.R."/>
            <person name="Henaut A."/>
            <person name="Hilbert H."/>
            <person name="Holsappel S."/>
            <person name="Hosono S."/>
            <person name="Hullo M.-F."/>
            <person name="Itaya M."/>
            <person name="Jones L.-M."/>
            <person name="Joris B."/>
            <person name="Karamata D."/>
            <person name="Kasahara Y."/>
            <person name="Klaerr-Blanchard M."/>
            <person name="Klein C."/>
            <person name="Kobayashi Y."/>
            <person name="Koetter P."/>
            <person name="Koningstein G."/>
            <person name="Krogh S."/>
            <person name="Kumano M."/>
            <person name="Kurita K."/>
            <person name="Lapidus A."/>
            <person name="Lardinois S."/>
            <person name="Lauber J."/>
            <person name="Lazarevic V."/>
            <person name="Lee S.-M."/>
            <person name="Levine A."/>
            <person name="Liu H."/>
            <person name="Masuda S."/>
            <person name="Mauel C."/>
            <person name="Medigue C."/>
            <person name="Medina N."/>
            <person name="Mellado R.P."/>
            <person name="Mizuno M."/>
            <person name="Moestl D."/>
            <person name="Nakai S."/>
            <person name="Noback M."/>
            <person name="Noone D."/>
            <person name="O'Reilly M."/>
            <person name="Ogawa K."/>
            <person name="Ogiwara A."/>
            <person name="Oudega B."/>
            <person name="Park S.-H."/>
            <person name="Parro V."/>
            <person name="Pohl T.M."/>
            <person name="Portetelle D."/>
            <person name="Porwollik S."/>
            <person name="Prescott A.M."/>
            <person name="Presecan E."/>
            <person name="Pujic P."/>
            <person name="Purnelle B."/>
            <person name="Rapoport G."/>
            <person name="Rey M."/>
            <person name="Reynolds S."/>
            <person name="Rieger M."/>
            <person name="Rivolta C."/>
            <person name="Rocha E."/>
            <person name="Roche B."/>
            <person name="Rose M."/>
            <person name="Sadaie Y."/>
            <person name="Sato T."/>
            <person name="Scanlan E."/>
            <person name="Schleich S."/>
            <person name="Schroeter R."/>
            <person name="Scoffone F."/>
            <person name="Sekiguchi J."/>
            <person name="Sekowska A."/>
            <person name="Seror S.J."/>
            <person name="Serror P."/>
            <person name="Shin B.-S."/>
            <person name="Soldo B."/>
            <person name="Sorokin A."/>
            <person name="Tacconi E."/>
            <person name="Takagi T."/>
            <person name="Takahashi H."/>
            <person name="Takemaru K."/>
            <person name="Takeuchi M."/>
            <person name="Tamakoshi A."/>
            <person name="Tanaka T."/>
            <person name="Terpstra P."/>
            <person name="Tognoni A."/>
            <person name="Tosato V."/>
            <person name="Uchiyama S."/>
            <person name="Vandenbol M."/>
            <person name="Vannier F."/>
            <person name="Vassarotti A."/>
            <person name="Viari A."/>
            <person name="Wambutt R."/>
            <person name="Wedler E."/>
            <person name="Wedler H."/>
            <person name="Weitzenegger T."/>
            <person name="Winters P."/>
            <person name="Wipat A."/>
            <person name="Yamamoto H."/>
            <person name="Yamane K."/>
            <person name="Yasumoto K."/>
            <person name="Yata K."/>
            <person name="Yoshida K."/>
            <person name="Yoshikawa H.-F."/>
            <person name="Zumstein E."/>
            <person name="Yoshikawa H."/>
            <person name="Danchin A."/>
        </authorList>
    </citation>
    <scope>NUCLEOTIDE SEQUENCE [LARGE SCALE GENOMIC DNA]</scope>
    <source>
        <strain>168</strain>
    </source>
</reference>
<reference key="2">
    <citation type="submission" date="1997-07" db="EMBL/GenBank/DDBJ databases">
        <title>Sequence analysis of the 70kb region between 17 and 23 degree of the Bacillus subtilis chromosome.</title>
        <authorList>
            <person name="Haga K."/>
            <person name="Liu H."/>
            <person name="Yasumoto K."/>
            <person name="Takahashi H."/>
            <person name="Yoshikawa H."/>
        </authorList>
    </citation>
    <scope>NUCLEOTIDE SEQUENCE [GENOMIC DNA] OF 1-74</scope>
    <source>
        <strain>168</strain>
    </source>
</reference>
<organism>
    <name type="scientific">Bacillus subtilis (strain 168)</name>
    <dbReference type="NCBI Taxonomy" id="224308"/>
    <lineage>
        <taxon>Bacteria</taxon>
        <taxon>Bacillati</taxon>
        <taxon>Bacillota</taxon>
        <taxon>Bacilli</taxon>
        <taxon>Bacillales</taxon>
        <taxon>Bacillaceae</taxon>
        <taxon>Bacillus</taxon>
    </lineage>
</organism>
<name>YBCF_BACSU</name>